<dbReference type="EMBL" id="CP000113">
    <property type="protein sequence ID" value="ABF89150.1"/>
    <property type="molecule type" value="Genomic_DNA"/>
</dbReference>
<dbReference type="RefSeq" id="WP_011554760.1">
    <property type="nucleotide sequence ID" value="NC_008095.1"/>
</dbReference>
<dbReference type="SMR" id="Q1D338"/>
<dbReference type="STRING" id="246197.MXAN_4773"/>
<dbReference type="EnsemblBacteria" id="ABF89150">
    <property type="protein sequence ID" value="ABF89150"/>
    <property type="gene ID" value="MXAN_4773"/>
</dbReference>
<dbReference type="GeneID" id="41362072"/>
<dbReference type="KEGG" id="mxa:MXAN_4773"/>
<dbReference type="eggNOG" id="COG0333">
    <property type="taxonomic scope" value="Bacteria"/>
</dbReference>
<dbReference type="HOGENOM" id="CLU_129084_1_3_7"/>
<dbReference type="OrthoDB" id="9801927at2"/>
<dbReference type="Proteomes" id="UP000002402">
    <property type="component" value="Chromosome"/>
</dbReference>
<dbReference type="GO" id="GO:0015934">
    <property type="term" value="C:large ribosomal subunit"/>
    <property type="evidence" value="ECO:0007669"/>
    <property type="project" value="InterPro"/>
</dbReference>
<dbReference type="GO" id="GO:0003735">
    <property type="term" value="F:structural constituent of ribosome"/>
    <property type="evidence" value="ECO:0007669"/>
    <property type="project" value="InterPro"/>
</dbReference>
<dbReference type="GO" id="GO:0006412">
    <property type="term" value="P:translation"/>
    <property type="evidence" value="ECO:0007669"/>
    <property type="project" value="UniProtKB-UniRule"/>
</dbReference>
<dbReference type="Gene3D" id="1.20.5.640">
    <property type="entry name" value="Single helix bin"/>
    <property type="match status" value="1"/>
</dbReference>
<dbReference type="HAMAP" id="MF_00340">
    <property type="entry name" value="Ribosomal_bL32"/>
    <property type="match status" value="1"/>
</dbReference>
<dbReference type="InterPro" id="IPR002677">
    <property type="entry name" value="Ribosomal_bL32"/>
</dbReference>
<dbReference type="InterPro" id="IPR044957">
    <property type="entry name" value="Ribosomal_bL32_bact"/>
</dbReference>
<dbReference type="InterPro" id="IPR011332">
    <property type="entry name" value="Ribosomal_zn-bd"/>
</dbReference>
<dbReference type="NCBIfam" id="TIGR01031">
    <property type="entry name" value="rpmF_bact"/>
    <property type="match status" value="1"/>
</dbReference>
<dbReference type="PANTHER" id="PTHR35534">
    <property type="entry name" value="50S RIBOSOMAL PROTEIN L32"/>
    <property type="match status" value="1"/>
</dbReference>
<dbReference type="PANTHER" id="PTHR35534:SF1">
    <property type="entry name" value="LARGE RIBOSOMAL SUBUNIT PROTEIN BL32"/>
    <property type="match status" value="1"/>
</dbReference>
<dbReference type="Pfam" id="PF01783">
    <property type="entry name" value="Ribosomal_L32p"/>
    <property type="match status" value="1"/>
</dbReference>
<dbReference type="SUPFAM" id="SSF57829">
    <property type="entry name" value="Zn-binding ribosomal proteins"/>
    <property type="match status" value="1"/>
</dbReference>
<protein>
    <recommendedName>
        <fullName evidence="1">Large ribosomal subunit protein bL32</fullName>
    </recommendedName>
    <alternativeName>
        <fullName evidence="3">50S ribosomal protein L32</fullName>
    </alternativeName>
</protein>
<gene>
    <name evidence="1" type="primary">rpmF</name>
    <name type="ordered locus">MXAN_4773</name>
</gene>
<name>RL32_MYXXD</name>
<keyword id="KW-1185">Reference proteome</keyword>
<keyword id="KW-0687">Ribonucleoprotein</keyword>
<keyword id="KW-0689">Ribosomal protein</keyword>
<organism>
    <name type="scientific">Myxococcus xanthus (strain DK1622)</name>
    <dbReference type="NCBI Taxonomy" id="246197"/>
    <lineage>
        <taxon>Bacteria</taxon>
        <taxon>Pseudomonadati</taxon>
        <taxon>Myxococcota</taxon>
        <taxon>Myxococcia</taxon>
        <taxon>Myxococcales</taxon>
        <taxon>Cystobacterineae</taxon>
        <taxon>Myxococcaceae</taxon>
        <taxon>Myxococcus</taxon>
    </lineage>
</organism>
<reference key="1">
    <citation type="journal article" date="2006" name="Proc. Natl. Acad. Sci. U.S.A.">
        <title>Evolution of sensory complexity recorded in a myxobacterial genome.</title>
        <authorList>
            <person name="Goldman B.S."/>
            <person name="Nierman W.C."/>
            <person name="Kaiser D."/>
            <person name="Slater S.C."/>
            <person name="Durkin A.S."/>
            <person name="Eisen J.A."/>
            <person name="Ronning C.M."/>
            <person name="Barbazuk W.B."/>
            <person name="Blanchard M."/>
            <person name="Field C."/>
            <person name="Halling C."/>
            <person name="Hinkle G."/>
            <person name="Iartchuk O."/>
            <person name="Kim H.S."/>
            <person name="Mackenzie C."/>
            <person name="Madupu R."/>
            <person name="Miller N."/>
            <person name="Shvartsbeyn A."/>
            <person name="Sullivan S.A."/>
            <person name="Vaudin M."/>
            <person name="Wiegand R."/>
            <person name="Kaplan H.B."/>
        </authorList>
    </citation>
    <scope>NUCLEOTIDE SEQUENCE [LARGE SCALE GENOMIC DNA]</scope>
    <source>
        <strain>DK1622</strain>
    </source>
</reference>
<sequence>MGVPKKRTSKMRRDRRRAANNNLRSAVQVTKCPNCKEPVMPHRACTSCGQYKGREVVAQAEA</sequence>
<comment type="similarity">
    <text evidence="1">Belongs to the bacterial ribosomal protein bL32 family.</text>
</comment>
<evidence type="ECO:0000255" key="1">
    <source>
        <dbReference type="HAMAP-Rule" id="MF_00340"/>
    </source>
</evidence>
<evidence type="ECO:0000256" key="2">
    <source>
        <dbReference type="SAM" id="MobiDB-lite"/>
    </source>
</evidence>
<evidence type="ECO:0000305" key="3"/>
<accession>Q1D338</accession>
<proteinExistence type="inferred from homology"/>
<feature type="chain" id="PRO_0000296512" description="Large ribosomal subunit protein bL32">
    <location>
        <begin position="1"/>
        <end position="62"/>
    </location>
</feature>
<feature type="region of interest" description="Disordered" evidence="2">
    <location>
        <begin position="1"/>
        <end position="22"/>
    </location>
</feature>
<feature type="compositionally biased region" description="Basic residues" evidence="2">
    <location>
        <begin position="1"/>
        <end position="18"/>
    </location>
</feature>